<keyword id="KW-0223">Dioxygenase</keyword>
<keyword id="KW-0408">Iron</keyword>
<keyword id="KW-0479">Metal-binding</keyword>
<keyword id="KW-0560">Oxidoreductase</keyword>
<gene>
    <name type="primary">GA2OX1</name>
    <name type="synonym">SLN</name>
</gene>
<reference key="1">
    <citation type="journal article" date="1999" name="Plant Physiol.">
        <title>The SLENDER gene of pea encodes a gibberellin 2-oxidase.</title>
        <authorList>
            <person name="Martin D.N."/>
            <person name="Proebsting W.M."/>
            <person name="Hedden P."/>
        </authorList>
    </citation>
    <scope>NUCLEOTIDE SEQUENCE [GENOMIC DNA / MRNA]</scope>
    <scope>FUNCTION</scope>
    <scope>TISSUE SPECIFICITY</scope>
    <scope>DISRUPTION PHENOTYPE</scope>
    <source>
        <strain>cv. Alaska</strain>
        <tissue>Seed</tissue>
    </source>
</reference>
<reference key="2">
    <citation type="journal article" date="1999" name="Plant J.">
        <title>Gibberellin 2-oxidation and the SLN gene of Pisum sativum.</title>
        <authorList>
            <person name="Lester D.R."/>
            <person name="Ross J.J."/>
            <person name="Smith J.J."/>
            <person name="Elliott R.C."/>
            <person name="Reid J.B."/>
        </authorList>
    </citation>
    <scope>NUCLEOTIDE SEQUENCE [MRNA] OF 6-327</scope>
    <scope>FUNCTION</scope>
    <scope>TISSUE SPECIFICITY</scope>
    <source>
        <strain>cv. Torsdag</strain>
        <tissue>Seed</tissue>
    </source>
</reference>
<reference key="3">
    <citation type="journal article" date="2005" name="BMC Plant Biol.">
        <title>Purification and kinetic studies of recombinant gibberellin dioxygenases.</title>
        <authorList>
            <person name="Lester D.R."/>
            <person name="Phillips A."/>
            <person name="Hedden P."/>
            <person name="Andersson I."/>
        </authorList>
    </citation>
    <scope>CHARACTERIZATION</scope>
    <scope>BIOPHYSICOCHEMICAL PROPERTIES</scope>
</reference>
<proteinExistence type="evidence at protein level"/>
<accession>Q9SQ80</accession>
<accession>Q9SQ81</accession>
<accession>Q9SQJ0</accession>
<accession>Q9XHM4</accession>
<dbReference type="EC" id="1.14.11.13"/>
<dbReference type="EMBL" id="AF056935">
    <property type="protein sequence ID" value="AAF08609.1"/>
    <property type="molecule type" value="mRNA"/>
</dbReference>
<dbReference type="EMBL" id="AF101382">
    <property type="protein sequence ID" value="AAF13734.1"/>
    <property type="status" value="ALT_SEQ"/>
    <property type="molecule type" value="mRNA"/>
</dbReference>
<dbReference type="EMBL" id="AF101383">
    <property type="protein sequence ID" value="AAF13735.1"/>
    <property type="molecule type" value="Genomic_DNA"/>
</dbReference>
<dbReference type="EMBL" id="AF100955">
    <property type="protein sequence ID" value="AAD45425.1"/>
    <property type="molecule type" value="mRNA"/>
</dbReference>
<dbReference type="SMR" id="Q9SQ80"/>
<dbReference type="BioCyc" id="MetaCyc:MONOMER-11639"/>
<dbReference type="BRENDA" id="1.14.11.13">
    <property type="organism ID" value="4872"/>
</dbReference>
<dbReference type="SABIO-RK" id="Q9SQ80"/>
<dbReference type="UniPathway" id="UPA00390"/>
<dbReference type="GO" id="GO:0045543">
    <property type="term" value="F:gibberellin 2-beta-dioxygenase activity"/>
    <property type="evidence" value="ECO:0007669"/>
    <property type="project" value="UniProtKB-EC"/>
</dbReference>
<dbReference type="GO" id="GO:0046872">
    <property type="term" value="F:metal ion binding"/>
    <property type="evidence" value="ECO:0007669"/>
    <property type="project" value="UniProtKB-KW"/>
</dbReference>
<dbReference type="GO" id="GO:0009686">
    <property type="term" value="P:gibberellin biosynthetic process"/>
    <property type="evidence" value="ECO:0007669"/>
    <property type="project" value="UniProtKB-UniPathway"/>
</dbReference>
<dbReference type="FunFam" id="2.60.120.330:FF:000014">
    <property type="entry name" value="Gibberellin 2-beta-dioxygenase 1"/>
    <property type="match status" value="1"/>
</dbReference>
<dbReference type="Gene3D" id="2.60.120.330">
    <property type="entry name" value="B-lactam Antibiotic, Isopenicillin N Synthase, Chain"/>
    <property type="match status" value="1"/>
</dbReference>
<dbReference type="InterPro" id="IPR026992">
    <property type="entry name" value="DIOX_N"/>
</dbReference>
<dbReference type="InterPro" id="IPR044861">
    <property type="entry name" value="IPNS-like_FE2OG_OXY"/>
</dbReference>
<dbReference type="InterPro" id="IPR027443">
    <property type="entry name" value="IPNS-like_sf"/>
</dbReference>
<dbReference type="InterPro" id="IPR050231">
    <property type="entry name" value="Iron_ascorbate_oxido_reductase"/>
</dbReference>
<dbReference type="InterPro" id="IPR005123">
    <property type="entry name" value="Oxoglu/Fe-dep_dioxygenase_dom"/>
</dbReference>
<dbReference type="PANTHER" id="PTHR47990">
    <property type="entry name" value="2-OXOGLUTARATE (2OG) AND FE(II)-DEPENDENT OXYGENASE SUPERFAMILY PROTEIN-RELATED"/>
    <property type="match status" value="1"/>
</dbReference>
<dbReference type="Pfam" id="PF03171">
    <property type="entry name" value="2OG-FeII_Oxy"/>
    <property type="match status" value="1"/>
</dbReference>
<dbReference type="Pfam" id="PF14226">
    <property type="entry name" value="DIOX_N"/>
    <property type="match status" value="1"/>
</dbReference>
<dbReference type="PRINTS" id="PR00682">
    <property type="entry name" value="IPNSYNTHASE"/>
</dbReference>
<dbReference type="SUPFAM" id="SSF51197">
    <property type="entry name" value="Clavaminate synthase-like"/>
    <property type="match status" value="1"/>
</dbReference>
<dbReference type="PROSITE" id="PS51471">
    <property type="entry name" value="FE2OG_OXY"/>
    <property type="match status" value="1"/>
</dbReference>
<organism>
    <name type="scientific">Pisum sativum</name>
    <name type="common">Garden pea</name>
    <name type="synonym">Lathyrus oleraceus</name>
    <dbReference type="NCBI Taxonomy" id="3888"/>
    <lineage>
        <taxon>Eukaryota</taxon>
        <taxon>Viridiplantae</taxon>
        <taxon>Streptophyta</taxon>
        <taxon>Embryophyta</taxon>
        <taxon>Tracheophyta</taxon>
        <taxon>Spermatophyta</taxon>
        <taxon>Magnoliopsida</taxon>
        <taxon>eudicotyledons</taxon>
        <taxon>Gunneridae</taxon>
        <taxon>Pentapetalae</taxon>
        <taxon>rosids</taxon>
        <taxon>fabids</taxon>
        <taxon>Fabales</taxon>
        <taxon>Fabaceae</taxon>
        <taxon>Papilionoideae</taxon>
        <taxon>50 kb inversion clade</taxon>
        <taxon>NPAAA clade</taxon>
        <taxon>Hologalegina</taxon>
        <taxon>IRL clade</taxon>
        <taxon>Fabeae</taxon>
        <taxon>Pisum</taxon>
    </lineage>
</organism>
<sequence>MVLLSKPTSEQYTYVRNNMPITFSSSIPLVDLSKPDAKTLIVKACEDFGFFKVINHGIPLDAISQLESEAFKFFSLPQTEKEKAGPANPFGYGNKRIGLNGDIGWIEYLLLTTNQDHNFSLYGEDIDKFRGLLKDYKCAMRNMACEILDLMAEGLKIQPKNVFSKLVMDKQSDCLFRVNHYPACPELAINGENLIGFGEHTDPQIISILRSNNTSGFQISLRDGSWISVPPDHSSFFINVGDSLQVMTNGRFKSVRHRVLANGIDPRLSMIYFCGPPLSEKIAPLPSLMKGKESLYKEFTWFEYKSSTYGSRLADNRLGNYERIAAT</sequence>
<feature type="chain" id="PRO_0000067311" description="Gibberellin 2-beta-dioxygenase 1">
    <location>
        <begin position="1"/>
        <end position="327"/>
    </location>
</feature>
<feature type="domain" description="Fe2OG dioxygenase" evidence="3">
    <location>
        <begin position="171"/>
        <end position="276"/>
    </location>
</feature>
<feature type="active site" evidence="2">
    <location>
        <position position="267"/>
    </location>
</feature>
<feature type="binding site" evidence="3">
    <location>
        <position position="200"/>
    </location>
    <ligand>
        <name>Fe cation</name>
        <dbReference type="ChEBI" id="CHEBI:24875"/>
    </ligand>
</feature>
<feature type="binding site" evidence="3">
    <location>
        <position position="202"/>
    </location>
    <ligand>
        <name>Fe cation</name>
        <dbReference type="ChEBI" id="CHEBI:24875"/>
    </ligand>
</feature>
<feature type="binding site" evidence="3">
    <location>
        <position position="257"/>
    </location>
    <ligand>
        <name>Fe cation</name>
        <dbReference type="ChEBI" id="CHEBI:24875"/>
    </ligand>
</feature>
<feature type="sequence conflict" description="In Ref. 1; AAF13734 and 2; AAD45425." evidence="7" ref="1 2">
    <original>D</original>
    <variation>E</variation>
    <location>
        <position position="116"/>
    </location>
</feature>
<feature type="sequence conflict" description="In Ref. 1; AAF08609." evidence="7" ref="1">
    <original>D</original>
    <variation>H</variation>
    <location>
        <position position="127"/>
    </location>
</feature>
<name>G2OX1_PEA</name>
<protein>
    <recommendedName>
        <fullName>Gibberellin 2-beta-dioxygenase 1</fullName>
        <ecNumber>1.14.11.13</ecNumber>
    </recommendedName>
    <alternativeName>
        <fullName>GA 2-oxidase 1</fullName>
    </alternativeName>
    <alternativeName>
        <fullName>Gibberellin 2-beta-hydroxylase 1</fullName>
    </alternativeName>
    <alternativeName>
        <fullName>Gibberellin 2-oxidase 1</fullName>
    </alternativeName>
    <alternativeName>
        <fullName>Protein SLENDER</fullName>
    </alternativeName>
</protein>
<evidence type="ECO:0000250" key="1"/>
<evidence type="ECO:0000255" key="2"/>
<evidence type="ECO:0000255" key="3">
    <source>
        <dbReference type="PROSITE-ProRule" id="PRU00805"/>
    </source>
</evidence>
<evidence type="ECO:0000269" key="4">
    <source>
    </source>
</evidence>
<evidence type="ECO:0000269" key="5">
    <source>
    </source>
</evidence>
<evidence type="ECO:0000269" key="6">
    <source>
    </source>
</evidence>
<evidence type="ECO:0000305" key="7"/>
<comment type="function">
    <text evidence="4 5">Catalyzes the 2-beta-hydroxylation of several biologically active gibberellins, leading to the homeostatic regulation of their endogenous level. Catabolism of gibberellins (GAs) plays a central role in plant development. Converts GA9/GA20 to GA51/GA29 and GA4/GA1 to GA34/GA8.</text>
</comment>
<comment type="catalytic activity">
    <reaction>
        <text>gibberellin A1 + 2-oxoglutarate + O2 = gibberellin A8 + succinate + CO2</text>
        <dbReference type="Rhea" id="RHEA:15005"/>
        <dbReference type="ChEBI" id="CHEBI:15379"/>
        <dbReference type="ChEBI" id="CHEBI:16526"/>
        <dbReference type="ChEBI" id="CHEBI:16810"/>
        <dbReference type="ChEBI" id="CHEBI:30031"/>
        <dbReference type="ChEBI" id="CHEBI:58524"/>
        <dbReference type="ChEBI" id="CHEBI:58594"/>
        <dbReference type="EC" id="1.14.11.13"/>
    </reaction>
</comment>
<comment type="cofactor">
    <cofactor evidence="1">
        <name>Fe cation</name>
        <dbReference type="ChEBI" id="CHEBI:24875"/>
    </cofactor>
</comment>
<comment type="biophysicochemical properties">
    <kinetics>
        <KM evidence="6">0.024 uM for GA20</KM>
        <Vmax evidence="6">4.4 pmol/sec/mg enzyme</Vmax>
    </kinetics>
</comment>
<comment type="pathway">
    <text>Plant hormone biosynthesis; gibberellin biosynthesis.</text>
</comment>
<comment type="tissue specificity">
    <text evidence="4 5">Predominantly expressed in roots, flowers, young fruits and seeds.</text>
</comment>
<comment type="disruption phenotype">
    <text evidence="5">Plants display to the slender phenotype, characterized by large amounts of GA20 that cannot be degraded, and is metabolized to excess GA1 on germination, producing plants with a characteristic slender or hyperelongated phenotype.</text>
</comment>
<comment type="similarity">
    <text evidence="7">Belongs to the iron/ascorbate-dependent oxidoreductase family. GA2OX subfamily.</text>
</comment>